<gene>
    <name type="primary">pam</name>
</gene>
<accession>Q6GZ04</accession>
<keyword id="KW-0002">3D-structure</keyword>
<keyword id="KW-0017">Alkaloid metabolism</keyword>
<keyword id="KW-0963">Cytoplasm</keyword>
<keyword id="KW-0413">Isomerase</keyword>
<keyword id="KW-0456">Lyase</keyword>
<keyword id="KW-0585">Phenylalanine catabolism</keyword>
<keyword id="KW-0587">Phenylpropanoid metabolism</keyword>
<keyword id="KW-0876">Taxol biosynthesis</keyword>
<evidence type="ECO:0000250" key="1"/>
<evidence type="ECO:0000250" key="2">
    <source>
        <dbReference type="UniProtKB" id="P11544"/>
    </source>
</evidence>
<evidence type="ECO:0000250" key="3">
    <source>
        <dbReference type="UniProtKB" id="Q68G84"/>
    </source>
</evidence>
<evidence type="ECO:0000269" key="4">
    <source>
    </source>
</evidence>
<evidence type="ECO:0000305" key="5"/>
<evidence type="ECO:0007744" key="6">
    <source>
        <dbReference type="PDB" id="3NZ4"/>
    </source>
</evidence>
<evidence type="ECO:0007829" key="7">
    <source>
        <dbReference type="PDB" id="3NZ4"/>
    </source>
</evidence>
<reference key="1">
    <citation type="journal article" date="2004" name="Proc. Natl. Acad. Sci. U.S.A.">
        <title>Random sequencing of an induced Taxus cell cDNA library for identification of clones involved in Taxol biosynthesis.</title>
        <authorList>
            <person name="Jennewein S."/>
            <person name="Wildung M.R."/>
            <person name="Chau M."/>
            <person name="Walker K."/>
            <person name="Croteau R."/>
        </authorList>
    </citation>
    <scope>NUCLEOTIDE SEQUENCE [MRNA]</scope>
</reference>
<reference key="2">
    <citation type="journal article" date="2011" name="Biochemistry">
        <title>Mechanistic, mutational, and structural evaluation of a Taxus phenylalanine aminomutase.</title>
        <authorList>
            <person name="Feng L."/>
            <person name="Wanninayake U."/>
            <person name="Strom S."/>
            <person name="Geiger J."/>
            <person name="Walker K.D."/>
        </authorList>
    </citation>
    <scope>X-RAY CRYSTALLOGRAPHY (2.38 ANGSTROMS) IN COMPLEX WITH TRANS-CINNAMATE</scope>
    <scope>FUNCTION</scope>
    <scope>CATALYTIC ACTIVITY</scope>
    <scope>BIOPHYSICOCHEMICAL PROPERTIES</scope>
    <scope>SUBUNIT</scope>
    <scope>PTM</scope>
    <scope>MUTAGENESIS OF TYR-80 AND LEU-104</scope>
</reference>
<organism>
    <name type="scientific">Taxus canadensis</name>
    <name type="common">Canadian yew</name>
    <dbReference type="NCBI Taxonomy" id="88032"/>
    <lineage>
        <taxon>Eukaryota</taxon>
        <taxon>Viridiplantae</taxon>
        <taxon>Streptophyta</taxon>
        <taxon>Embryophyta</taxon>
        <taxon>Tracheophyta</taxon>
        <taxon>Spermatophyta</taxon>
        <taxon>Pinopsida</taxon>
        <taxon>Pinidae</taxon>
        <taxon>Conifers II</taxon>
        <taxon>Cupressales</taxon>
        <taxon>Taxaceae</taxon>
        <taxon>Taxus</taxon>
    </lineage>
</organism>
<feature type="chain" id="PRO_0000429969" description="Phenylalanine aminomutase (L-beta-phenylalanine forming)">
    <location>
        <begin position="1"/>
        <end position="698"/>
    </location>
</feature>
<feature type="active site" description="Proton donor/acceptor" evidence="3">
    <location>
        <position position="80"/>
    </location>
</feature>
<feature type="binding site" evidence="3">
    <location>
        <position position="231"/>
    </location>
    <ligand>
        <name>(E)-cinnamate</name>
        <dbReference type="ChEBI" id="CHEBI:15669"/>
    </ligand>
</feature>
<feature type="binding site" evidence="4 6">
    <location>
        <position position="319"/>
    </location>
    <ligand>
        <name>(E)-cinnamate</name>
        <dbReference type="ChEBI" id="CHEBI:15669"/>
    </ligand>
</feature>
<feature type="binding site" evidence="4 6">
    <location>
        <position position="325"/>
    </location>
    <ligand>
        <name>(E)-cinnamate</name>
        <dbReference type="ChEBI" id="CHEBI:15669"/>
    </ligand>
</feature>
<feature type="binding site" evidence="3">
    <location>
        <position position="355"/>
    </location>
    <ligand>
        <name>(E)-cinnamate</name>
        <dbReference type="ChEBI" id="CHEBI:15669"/>
    </ligand>
</feature>
<feature type="binding site" evidence="2">
    <location>
        <position position="427"/>
    </location>
    <ligand>
        <name>(E)-cinnamate</name>
        <dbReference type="ChEBI" id="CHEBI:15669"/>
    </ligand>
</feature>
<feature type="binding site" evidence="2">
    <location>
        <position position="455"/>
    </location>
    <ligand>
        <name>(E)-cinnamate</name>
        <dbReference type="ChEBI" id="CHEBI:15669"/>
    </ligand>
</feature>
<feature type="binding site" evidence="3">
    <location>
        <position position="458"/>
    </location>
    <ligand>
        <name>(E)-cinnamate</name>
        <dbReference type="ChEBI" id="CHEBI:15669"/>
    </ligand>
</feature>
<feature type="modified residue" description="2,3-didehydroalanine (Ser)" evidence="3">
    <location>
        <position position="176"/>
    </location>
</feature>
<feature type="cross-link" description="5-imidazolinone (Ala-Gly)" evidence="3">
    <location>
        <begin position="175"/>
        <end position="177"/>
    </location>
</feature>
<feature type="mutagenesis site" description="Abolishes enzyme activity." evidence="4">
    <original>Y</original>
    <variation>F</variation>
    <location>
        <position position="80"/>
    </location>
</feature>
<feature type="mutagenesis site" description="Decreases enzyme activity." evidence="4">
    <original>L</original>
    <variation>A</variation>
    <location>
        <position position="104"/>
    </location>
</feature>
<feature type="helix" evidence="7">
    <location>
        <begin position="10"/>
        <end position="23"/>
    </location>
</feature>
<feature type="strand" evidence="7">
    <location>
        <begin position="26"/>
        <end position="33"/>
    </location>
</feature>
<feature type="helix" evidence="7">
    <location>
        <begin position="37"/>
        <end position="45"/>
    </location>
</feature>
<feature type="strand" evidence="7">
    <location>
        <begin position="50"/>
        <end position="53"/>
    </location>
</feature>
<feature type="helix" evidence="7">
    <location>
        <begin position="55"/>
        <end position="74"/>
    </location>
</feature>
<feature type="turn" evidence="7">
    <location>
        <begin position="81"/>
        <end position="83"/>
    </location>
</feature>
<feature type="helix" evidence="7">
    <location>
        <begin position="87"/>
        <end position="89"/>
    </location>
</feature>
<feature type="helix" evidence="7">
    <location>
        <begin position="97"/>
        <end position="108"/>
    </location>
</feature>
<feature type="strand" evidence="7">
    <location>
        <begin position="118"/>
        <end position="120"/>
    </location>
</feature>
<feature type="helix" evidence="7">
    <location>
        <begin position="126"/>
        <end position="140"/>
    </location>
</feature>
<feature type="helix" evidence="7">
    <location>
        <begin position="149"/>
        <end position="160"/>
    </location>
</feature>
<feature type="strand" evidence="7">
    <location>
        <begin position="163"/>
        <end position="165"/>
    </location>
</feature>
<feature type="helix" evidence="7">
    <location>
        <begin position="179"/>
        <end position="189"/>
    </location>
</feature>
<feature type="strand" evidence="7">
    <location>
        <begin position="195"/>
        <end position="202"/>
    </location>
</feature>
<feature type="strand" evidence="7">
    <location>
        <begin position="204"/>
        <end position="206"/>
    </location>
</feature>
<feature type="helix" evidence="7">
    <location>
        <begin position="207"/>
        <end position="213"/>
    </location>
</feature>
<feature type="helix" evidence="7">
    <location>
        <begin position="225"/>
        <end position="230"/>
    </location>
</feature>
<feature type="helix" evidence="7">
    <location>
        <begin position="234"/>
        <end position="265"/>
    </location>
</feature>
<feature type="helix" evidence="7">
    <location>
        <begin position="269"/>
        <end position="272"/>
    </location>
</feature>
<feature type="helix" evidence="7">
    <location>
        <begin position="274"/>
        <end position="278"/>
    </location>
</feature>
<feature type="helix" evidence="7">
    <location>
        <begin position="283"/>
        <end position="296"/>
    </location>
</feature>
<feature type="helix" evidence="7">
    <location>
        <begin position="300"/>
        <end position="309"/>
    </location>
</feature>
<feature type="helix" evidence="7">
    <location>
        <begin position="313"/>
        <end position="315"/>
    </location>
</feature>
<feature type="helix" evidence="7">
    <location>
        <begin position="322"/>
        <end position="325"/>
    </location>
</feature>
<feature type="helix" evidence="7">
    <location>
        <begin position="327"/>
        <end position="349"/>
    </location>
</feature>
<feature type="strand" evidence="7">
    <location>
        <begin position="355"/>
        <end position="359"/>
    </location>
</feature>
<feature type="helix" evidence="7">
    <location>
        <begin position="360"/>
        <end position="362"/>
    </location>
</feature>
<feature type="strand" evidence="7">
    <location>
        <begin position="364"/>
        <end position="366"/>
    </location>
</feature>
<feature type="helix" evidence="7">
    <location>
        <begin position="374"/>
        <end position="402"/>
    </location>
</feature>
<feature type="helix" evidence="7">
    <location>
        <begin position="404"/>
        <end position="407"/>
    </location>
</feature>
<feature type="helix" evidence="7">
    <location>
        <begin position="412"/>
        <end position="414"/>
    </location>
</feature>
<feature type="helix" evidence="7">
    <location>
        <begin position="420"/>
        <end position="422"/>
    </location>
</feature>
<feature type="helix" evidence="7">
    <location>
        <begin position="427"/>
        <end position="443"/>
    </location>
</feature>
<feature type="helix" evidence="7">
    <location>
        <begin position="448"/>
        <end position="450"/>
    </location>
</feature>
<feature type="turn" evidence="7">
    <location>
        <begin position="455"/>
        <end position="458"/>
    </location>
</feature>
<feature type="strand" evidence="7">
    <location>
        <begin position="459"/>
        <end position="461"/>
    </location>
</feature>
<feature type="helix" evidence="7">
    <location>
        <begin position="465"/>
        <end position="517"/>
    </location>
</feature>
<feature type="helix" evidence="7">
    <location>
        <begin position="522"/>
        <end position="534"/>
    </location>
</feature>
<feature type="helix" evidence="7">
    <location>
        <begin position="537"/>
        <end position="539"/>
    </location>
</feature>
<feature type="turn" evidence="7">
    <location>
        <begin position="540"/>
        <end position="542"/>
    </location>
</feature>
<feature type="helix" evidence="7">
    <location>
        <begin position="550"/>
        <end position="565"/>
    </location>
</feature>
<feature type="helix" evidence="7">
    <location>
        <begin position="574"/>
        <end position="603"/>
    </location>
</feature>
<feature type="helix" evidence="7">
    <location>
        <begin position="620"/>
        <end position="622"/>
    </location>
</feature>
<feature type="helix" evidence="7">
    <location>
        <begin position="626"/>
        <end position="633"/>
    </location>
</feature>
<feature type="turn" evidence="7">
    <location>
        <begin position="634"/>
        <end position="637"/>
    </location>
</feature>
<feature type="strand" evidence="7">
    <location>
        <begin position="643"/>
        <end position="645"/>
    </location>
</feature>
<feature type="helix" evidence="7">
    <location>
        <begin position="649"/>
        <end position="662"/>
    </location>
</feature>
<feature type="helix" evidence="7">
    <location>
        <begin position="666"/>
        <end position="673"/>
    </location>
</feature>
<protein>
    <recommendedName>
        <fullName>Phenylalanine aminomutase (L-beta-phenylalanine forming)</fullName>
        <ecNumber evidence="4">5.4.3.10</ecNumber>
    </recommendedName>
    <alternativeName>
        <fullName>Phenylalanine ammonia-lyase</fullName>
        <ecNumber evidence="4">4.3.1.24</ecNumber>
    </alternativeName>
</protein>
<comment type="function">
    <text evidence="4">Phenylalanine aminomutase that catalyzes the rearrangement of L-phenylalanine to R-beta-phenylalanine. Catalyzes the first committed step in the biosynthesis of the side chain of the alkaloid taxol (paclitaxel), a widely-used compound with antitumor activity. Also has low phenylalanine ammonia-lyase activity.</text>
</comment>
<comment type="catalytic activity">
    <reaction evidence="4">
        <text>L-phenylalanine = L-beta-phenylalanine</text>
        <dbReference type="Rhea" id="RHEA:34395"/>
        <dbReference type="ChEBI" id="CHEBI:58095"/>
        <dbReference type="ChEBI" id="CHEBI:67158"/>
        <dbReference type="EC" id="5.4.3.10"/>
    </reaction>
</comment>
<comment type="catalytic activity">
    <reaction evidence="4">
        <text>L-phenylalanine = (E)-cinnamate + NH4(+)</text>
        <dbReference type="Rhea" id="RHEA:21384"/>
        <dbReference type="ChEBI" id="CHEBI:15669"/>
        <dbReference type="ChEBI" id="CHEBI:28938"/>
        <dbReference type="ChEBI" id="CHEBI:58095"/>
        <dbReference type="EC" id="4.3.1.24"/>
    </reaction>
</comment>
<comment type="biophysicochemical properties">
    <kinetics>
        <KM evidence="4">0.057 mM for L-phenylalanine</KM>
        <text evidence="4">kcat is 0.053 sec(-1) for L-phenylalanine.</text>
    </kinetics>
</comment>
<comment type="pathway">
    <text evidence="5">Alkaloid biosynthesis; taxol biosynthesis.</text>
</comment>
<comment type="pathway">
    <text>Phenylpropanoid metabolism; trans-cinnamate biosynthesis; trans-cinnamate from L-phenylalanine: step 1/1.</text>
</comment>
<comment type="subunit">
    <text evidence="4">Homotetramer.</text>
</comment>
<comment type="subcellular location">
    <subcellularLocation>
        <location evidence="1">Cytoplasm</location>
    </subcellularLocation>
</comment>
<comment type="PTM">
    <text evidence="3">Contains an active site 4-methylidene-imidazol-5-one (MIO), which is formed autocatalytically by cyclization and dehydration of residues Ala-Ser-Gly.</text>
</comment>
<comment type="similarity">
    <text evidence="5">Belongs to the PAL/histidase family.</text>
</comment>
<name>PAM_TAXCA</name>
<dbReference type="EC" id="5.4.3.10" evidence="4"/>
<dbReference type="EC" id="4.3.1.24" evidence="4"/>
<dbReference type="EMBL" id="AY582743">
    <property type="protein sequence ID" value="AAT47186.1"/>
    <property type="molecule type" value="mRNA"/>
</dbReference>
<dbReference type="PDB" id="3NZ4">
    <property type="method" value="X-ray"/>
    <property type="resolution" value="2.38 A"/>
    <property type="chains" value="A/B=1-698"/>
</dbReference>
<dbReference type="PDBsum" id="3NZ4"/>
<dbReference type="SMR" id="Q6GZ04"/>
<dbReference type="KEGG" id="ag:AAT47186"/>
<dbReference type="BioCyc" id="MetaCyc:MONOMER-17466"/>
<dbReference type="BRENDA" id="5.4.3.10">
    <property type="organism ID" value="6224"/>
</dbReference>
<dbReference type="UniPathway" id="UPA00713">
    <property type="reaction ID" value="UER00725"/>
</dbReference>
<dbReference type="UniPathway" id="UPA00842"/>
<dbReference type="EvolutionaryTrace" id="Q6GZ04"/>
<dbReference type="GO" id="GO:0005737">
    <property type="term" value="C:cytoplasm"/>
    <property type="evidence" value="ECO:0007669"/>
    <property type="project" value="UniProtKB-SubCell"/>
</dbReference>
<dbReference type="GO" id="GO:0016869">
    <property type="term" value="F:intramolecular aminotransferase activity"/>
    <property type="evidence" value="ECO:0000314"/>
    <property type="project" value="UniProtKB"/>
</dbReference>
<dbReference type="GO" id="GO:0045548">
    <property type="term" value="F:phenylalanine ammonia-lyase activity"/>
    <property type="evidence" value="ECO:0007669"/>
    <property type="project" value="UniProtKB-EC"/>
</dbReference>
<dbReference type="GO" id="GO:0009821">
    <property type="term" value="P:alkaloid biosynthetic process"/>
    <property type="evidence" value="ECO:0000304"/>
    <property type="project" value="UniProtKB"/>
</dbReference>
<dbReference type="GO" id="GO:0009800">
    <property type="term" value="P:cinnamic acid biosynthetic process"/>
    <property type="evidence" value="ECO:0007669"/>
    <property type="project" value="UniProtKB-UniPathway"/>
</dbReference>
<dbReference type="GO" id="GO:0006559">
    <property type="term" value="P:L-phenylalanine catabolic process"/>
    <property type="evidence" value="ECO:0007669"/>
    <property type="project" value="UniProtKB-KW"/>
</dbReference>
<dbReference type="GO" id="GO:0006558">
    <property type="term" value="P:L-phenylalanine metabolic process"/>
    <property type="evidence" value="ECO:0000314"/>
    <property type="project" value="UniProtKB"/>
</dbReference>
<dbReference type="GO" id="GO:0042617">
    <property type="term" value="P:paclitaxel biosynthetic process"/>
    <property type="evidence" value="ECO:0000304"/>
    <property type="project" value="UniProtKB"/>
</dbReference>
<dbReference type="GO" id="GO:0051289">
    <property type="term" value="P:protein homotetramerization"/>
    <property type="evidence" value="ECO:0000314"/>
    <property type="project" value="UniProtKB"/>
</dbReference>
<dbReference type="CDD" id="cd00332">
    <property type="entry name" value="PAL-HAL"/>
    <property type="match status" value="1"/>
</dbReference>
<dbReference type="FunFam" id="1.10.274.20:FF:000003">
    <property type="entry name" value="Phenylalanine aminomutase (L-beta-phenylalanine forming)"/>
    <property type="match status" value="1"/>
</dbReference>
<dbReference type="Gene3D" id="1.20.200.10">
    <property type="entry name" value="Fumarase/aspartase (Central domain)"/>
    <property type="match status" value="1"/>
</dbReference>
<dbReference type="Gene3D" id="1.10.275.10">
    <property type="entry name" value="Fumarase/aspartase (N-terminal domain)"/>
    <property type="match status" value="1"/>
</dbReference>
<dbReference type="Gene3D" id="1.10.274.20">
    <property type="entry name" value="Phenylalanine ammonia-lyase 1, domain 3"/>
    <property type="match status" value="1"/>
</dbReference>
<dbReference type="InterPro" id="IPR001106">
    <property type="entry name" value="Aromatic_Lyase"/>
</dbReference>
<dbReference type="InterPro" id="IPR024083">
    <property type="entry name" value="Fumarase/histidase_N"/>
</dbReference>
<dbReference type="InterPro" id="IPR008948">
    <property type="entry name" value="L-Aspartase-like"/>
</dbReference>
<dbReference type="InterPro" id="IPR022313">
    <property type="entry name" value="Phe/His_NH3-lyase_AS"/>
</dbReference>
<dbReference type="InterPro" id="IPR005922">
    <property type="entry name" value="Phe_NH3-lyase"/>
</dbReference>
<dbReference type="InterPro" id="IPR023144">
    <property type="entry name" value="Phe_NH3-lyase_shielding_dom_sf"/>
</dbReference>
<dbReference type="InterPro" id="IPR031008">
    <property type="entry name" value="Taxol_Phe_23mut"/>
</dbReference>
<dbReference type="NCBIfam" id="TIGR01226">
    <property type="entry name" value="phe_am_lyase"/>
    <property type="match status" value="1"/>
</dbReference>
<dbReference type="NCBIfam" id="TIGR04473">
    <property type="entry name" value="taxol_Phe_23mut"/>
    <property type="match status" value="1"/>
</dbReference>
<dbReference type="PANTHER" id="PTHR10362">
    <property type="entry name" value="HISTIDINE AMMONIA-LYASE"/>
    <property type="match status" value="1"/>
</dbReference>
<dbReference type="Pfam" id="PF00221">
    <property type="entry name" value="Lyase_aromatic"/>
    <property type="match status" value="1"/>
</dbReference>
<dbReference type="SUPFAM" id="SSF48557">
    <property type="entry name" value="L-aspartase-like"/>
    <property type="match status" value="1"/>
</dbReference>
<dbReference type="PROSITE" id="PS00488">
    <property type="entry name" value="PAL_HISTIDASE"/>
    <property type="match status" value="1"/>
</dbReference>
<sequence>MGFAVESRSHVKDILGLINTFNEVKKITVDGTTPITVAHVAALARRHDVKVALEAEQCRARVETCSSWVQRKAEDGADIYGVTTGFGACSSRRTNQLSELQESLIRCLLAGVFTKGCASSVDELPATATRSAMLLRLNSFTYGCSGIRWEVMEALEKLLNSNVSPKVPLRGSVSASGDLIPLAYIAGLLIGKPSVVARIGDDVEVPAPEALSRVGLRPFKLQAKEGLALVNGTSFATALASTVMYDANVLLLLVETLCGMFCEVIFGREEFAHPLIHKVKPHPGQIESAELLEWLLRSSPFQDLSREYYSIDKLKKPKQDRYALRSSPQWLAPLVQTIRDATTTVETEVNSANDNPIIDHANDRALHGANFQGSAVGFYMDYVRIAVAGLGKLLFAQFTELMIEYYSNGLPGNLSLGPDLSVDYGLKGLDIAMAAYSSELQYLANPVTTHVHSAEQHNQDINSLALISARKTEEALDILKLMIASHLTAMCQAVDLRQLEEALVKVVENVVSTLADECGLPNDTKARLLYVAKAVPVYTYLESPCDPTLPLLLGLEQSCFGSILALHKKDGIETDTLVDRLAEFEKRLSDRLENEMTAVRVLYEKKGHKTADNNDALVRIQGSRFLPFYRFVREELDTGVMSARREQTPQEDVQKVFDAIADGRITVPLLHCLQGFLGQPNGCANGVESFQSVWNKSA</sequence>
<proteinExistence type="evidence at protein level"/>